<dbReference type="EC" id="5.2.1.8"/>
<dbReference type="EMBL" id="AAHF01000013">
    <property type="protein sequence ID" value="EAL85158.1"/>
    <property type="status" value="ALT_SEQ"/>
    <property type="molecule type" value="Genomic_DNA"/>
</dbReference>
<dbReference type="RefSeq" id="XP_747196.1">
    <property type="nucleotide sequence ID" value="XM_742103.1"/>
</dbReference>
<dbReference type="SMR" id="Q4WCM6"/>
<dbReference type="STRING" id="330879.Q4WCM6"/>
<dbReference type="GeneID" id="3504948"/>
<dbReference type="KEGG" id="afm:AFUA_8G03890"/>
<dbReference type="eggNOG" id="KOG0879">
    <property type="taxonomic scope" value="Eukaryota"/>
</dbReference>
<dbReference type="HOGENOM" id="CLU_012062_4_3_1"/>
<dbReference type="InParanoid" id="Q4WCM6"/>
<dbReference type="OrthoDB" id="193499at2759"/>
<dbReference type="Proteomes" id="UP000002530">
    <property type="component" value="Chromosome 8"/>
</dbReference>
<dbReference type="GO" id="GO:0005737">
    <property type="term" value="C:cytoplasm"/>
    <property type="evidence" value="ECO:0000318"/>
    <property type="project" value="GO_Central"/>
</dbReference>
<dbReference type="GO" id="GO:0043231">
    <property type="term" value="C:intracellular membrane-bounded organelle"/>
    <property type="evidence" value="ECO:0000318"/>
    <property type="project" value="GO_Central"/>
</dbReference>
<dbReference type="GO" id="GO:0005634">
    <property type="term" value="C:nucleus"/>
    <property type="evidence" value="ECO:0007669"/>
    <property type="project" value="UniProtKB-SubCell"/>
</dbReference>
<dbReference type="GO" id="GO:0016018">
    <property type="term" value="F:cyclosporin A binding"/>
    <property type="evidence" value="ECO:0000318"/>
    <property type="project" value="GO_Central"/>
</dbReference>
<dbReference type="GO" id="GO:0003755">
    <property type="term" value="F:peptidyl-prolyl cis-trans isomerase activity"/>
    <property type="evidence" value="ECO:0000318"/>
    <property type="project" value="GO_Central"/>
</dbReference>
<dbReference type="GO" id="GO:0006457">
    <property type="term" value="P:protein folding"/>
    <property type="evidence" value="ECO:0000318"/>
    <property type="project" value="GO_Central"/>
</dbReference>
<dbReference type="CDD" id="cd01926">
    <property type="entry name" value="cyclophilin_ABH_like"/>
    <property type="match status" value="1"/>
</dbReference>
<dbReference type="FunFam" id="2.40.100.10:FF:000035">
    <property type="entry name" value="Peptidyl-prolyl cis-trans isomerase"/>
    <property type="match status" value="1"/>
</dbReference>
<dbReference type="Gene3D" id="2.40.100.10">
    <property type="entry name" value="Cyclophilin-like"/>
    <property type="match status" value="1"/>
</dbReference>
<dbReference type="InterPro" id="IPR029000">
    <property type="entry name" value="Cyclophilin-like_dom_sf"/>
</dbReference>
<dbReference type="InterPro" id="IPR024936">
    <property type="entry name" value="Cyclophilin-type_PPIase"/>
</dbReference>
<dbReference type="InterPro" id="IPR020892">
    <property type="entry name" value="Cyclophilin-type_PPIase_CS"/>
</dbReference>
<dbReference type="InterPro" id="IPR002130">
    <property type="entry name" value="Cyclophilin-type_PPIase_dom"/>
</dbReference>
<dbReference type="PANTHER" id="PTHR11071">
    <property type="entry name" value="PEPTIDYL-PROLYL CIS-TRANS ISOMERASE"/>
    <property type="match status" value="1"/>
</dbReference>
<dbReference type="PANTHER" id="PTHR11071:SF561">
    <property type="entry name" value="PEPTIDYL-PROLYL CIS-TRANS ISOMERASE D-RELATED"/>
    <property type="match status" value="1"/>
</dbReference>
<dbReference type="Pfam" id="PF00160">
    <property type="entry name" value="Pro_isomerase"/>
    <property type="match status" value="1"/>
</dbReference>
<dbReference type="PIRSF" id="PIRSF001467">
    <property type="entry name" value="Peptidylpro_ismrse"/>
    <property type="match status" value="1"/>
</dbReference>
<dbReference type="PRINTS" id="PR00153">
    <property type="entry name" value="CSAPPISMRASE"/>
</dbReference>
<dbReference type="SUPFAM" id="SSF50891">
    <property type="entry name" value="Cyclophilin-like"/>
    <property type="match status" value="1"/>
</dbReference>
<dbReference type="PROSITE" id="PS00170">
    <property type="entry name" value="CSA_PPIASE_1"/>
    <property type="match status" value="1"/>
</dbReference>
<dbReference type="PROSITE" id="PS50072">
    <property type="entry name" value="CSA_PPIASE_2"/>
    <property type="match status" value="1"/>
</dbReference>
<reference key="1">
    <citation type="journal article" date="2005" name="Nature">
        <title>Genomic sequence of the pathogenic and allergenic filamentous fungus Aspergillus fumigatus.</title>
        <authorList>
            <person name="Nierman W.C."/>
            <person name="Pain A."/>
            <person name="Anderson M.J."/>
            <person name="Wortman J.R."/>
            <person name="Kim H.S."/>
            <person name="Arroyo J."/>
            <person name="Berriman M."/>
            <person name="Abe K."/>
            <person name="Archer D.B."/>
            <person name="Bermejo C."/>
            <person name="Bennett J.W."/>
            <person name="Bowyer P."/>
            <person name="Chen D."/>
            <person name="Collins M."/>
            <person name="Coulsen R."/>
            <person name="Davies R."/>
            <person name="Dyer P.S."/>
            <person name="Farman M.L."/>
            <person name="Fedorova N."/>
            <person name="Fedorova N.D."/>
            <person name="Feldblyum T.V."/>
            <person name="Fischer R."/>
            <person name="Fosker N."/>
            <person name="Fraser A."/>
            <person name="Garcia J.L."/>
            <person name="Garcia M.J."/>
            <person name="Goble A."/>
            <person name="Goldman G.H."/>
            <person name="Gomi K."/>
            <person name="Griffith-Jones S."/>
            <person name="Gwilliam R."/>
            <person name="Haas B.J."/>
            <person name="Haas H."/>
            <person name="Harris D.E."/>
            <person name="Horiuchi H."/>
            <person name="Huang J."/>
            <person name="Humphray S."/>
            <person name="Jimenez J."/>
            <person name="Keller N."/>
            <person name="Khouri H."/>
            <person name="Kitamoto K."/>
            <person name="Kobayashi T."/>
            <person name="Konzack S."/>
            <person name="Kulkarni R."/>
            <person name="Kumagai T."/>
            <person name="Lafton A."/>
            <person name="Latge J.-P."/>
            <person name="Li W."/>
            <person name="Lord A."/>
            <person name="Lu C."/>
            <person name="Majoros W.H."/>
            <person name="May G.S."/>
            <person name="Miller B.L."/>
            <person name="Mohamoud Y."/>
            <person name="Molina M."/>
            <person name="Monod M."/>
            <person name="Mouyna I."/>
            <person name="Mulligan S."/>
            <person name="Murphy L.D."/>
            <person name="O'Neil S."/>
            <person name="Paulsen I."/>
            <person name="Penalva M.A."/>
            <person name="Pertea M."/>
            <person name="Price C."/>
            <person name="Pritchard B.L."/>
            <person name="Quail M.A."/>
            <person name="Rabbinowitsch E."/>
            <person name="Rawlins N."/>
            <person name="Rajandream M.A."/>
            <person name="Reichard U."/>
            <person name="Renauld H."/>
            <person name="Robson G.D."/>
            <person name="Rodriguez de Cordoba S."/>
            <person name="Rodriguez-Pena J.M."/>
            <person name="Ronning C.M."/>
            <person name="Rutter S."/>
            <person name="Salzberg S.L."/>
            <person name="Sanchez M."/>
            <person name="Sanchez-Ferrero J.C."/>
            <person name="Saunders D."/>
            <person name="Seeger K."/>
            <person name="Squares R."/>
            <person name="Squares S."/>
            <person name="Takeuchi M."/>
            <person name="Tekaia F."/>
            <person name="Turner G."/>
            <person name="Vazquez de Aldana C.R."/>
            <person name="Weidman J."/>
            <person name="White O."/>
            <person name="Woodward J.R."/>
            <person name="Yu J.-H."/>
            <person name="Fraser C.M."/>
            <person name="Galagan J.E."/>
            <person name="Asai K."/>
            <person name="Machida M."/>
            <person name="Hall N."/>
            <person name="Barrell B.G."/>
            <person name="Denning D.W."/>
        </authorList>
    </citation>
    <scope>NUCLEOTIDE SEQUENCE [LARGE SCALE GENOMIC DNA]</scope>
    <source>
        <strain>ATCC MYA-4609 / CBS 101355 / FGSC A1100 / Af293</strain>
    </source>
</reference>
<reference key="2">
    <citation type="submission" date="2006-02" db="UniProtKB">
        <authorList>
            <person name="Pemberton T.J."/>
        </authorList>
    </citation>
    <scope>REVISION OF GENE MODEL</scope>
</reference>
<feature type="chain" id="PRO_0000232953" description="Peptidyl-prolyl cis-trans isomerase H">
    <location>
        <begin position="1"/>
        <end position="181"/>
    </location>
</feature>
<feature type="domain" description="PPIase cyclophilin-type" evidence="2">
    <location>
        <begin position="17"/>
        <end position="180"/>
    </location>
</feature>
<name>PPIH_ASPFU</name>
<evidence type="ECO:0000250" key="1"/>
<evidence type="ECO:0000255" key="2">
    <source>
        <dbReference type="PROSITE-ProRule" id="PRU00156"/>
    </source>
</evidence>
<evidence type="ECO:0000305" key="3"/>
<protein>
    <recommendedName>
        <fullName>Peptidyl-prolyl cis-trans isomerase H</fullName>
        <shortName>PPIase H</shortName>
        <ecNumber>5.2.1.8</ecNumber>
    </recommendedName>
    <alternativeName>
        <fullName>Rotamase H</fullName>
    </alternativeName>
</protein>
<keyword id="KW-0413">Isomerase</keyword>
<keyword id="KW-0539">Nucleus</keyword>
<keyword id="KW-1185">Reference proteome</keyword>
<keyword id="KW-0697">Rotamase</keyword>
<gene>
    <name type="primary">cyp3</name>
    <name type="ORF">AFUA_8G03890</name>
</gene>
<accession>Q4WCM6</accession>
<proteinExistence type="inferred from homology"/>
<organism>
    <name type="scientific">Aspergillus fumigatus (strain ATCC MYA-4609 / CBS 101355 / FGSC A1100 / Af293)</name>
    <name type="common">Neosartorya fumigata</name>
    <dbReference type="NCBI Taxonomy" id="330879"/>
    <lineage>
        <taxon>Eukaryota</taxon>
        <taxon>Fungi</taxon>
        <taxon>Dikarya</taxon>
        <taxon>Ascomycota</taxon>
        <taxon>Pezizomycotina</taxon>
        <taxon>Eurotiomycetes</taxon>
        <taxon>Eurotiomycetidae</taxon>
        <taxon>Eurotiales</taxon>
        <taxon>Aspergillaceae</taxon>
        <taxon>Aspergillus</taxon>
        <taxon>Aspergillus subgen. Fumigati</taxon>
    </lineage>
</organism>
<comment type="function">
    <text evidence="1">PPIases accelerate the folding of proteins. It catalyzes the cis-trans isomerization of proline imidic peptide bonds in oligopeptides (By similarity).</text>
</comment>
<comment type="catalytic activity">
    <reaction>
        <text>[protein]-peptidylproline (omega=180) = [protein]-peptidylproline (omega=0)</text>
        <dbReference type="Rhea" id="RHEA:16237"/>
        <dbReference type="Rhea" id="RHEA-COMP:10747"/>
        <dbReference type="Rhea" id="RHEA-COMP:10748"/>
        <dbReference type="ChEBI" id="CHEBI:83833"/>
        <dbReference type="ChEBI" id="CHEBI:83834"/>
        <dbReference type="EC" id="5.2.1.8"/>
    </reaction>
</comment>
<comment type="subcellular location">
    <subcellularLocation>
        <location evidence="1">Nucleus</location>
    </subcellularLocation>
</comment>
<comment type="similarity">
    <text evidence="3">Belongs to the cyclophilin-type PPIase family. PPIase H subfamily.</text>
</comment>
<comment type="sequence caution" evidence="3">
    <conflict type="erroneous gene model prediction">
        <sequence resource="EMBL-CDS" id="EAL85158"/>
    </conflict>
</comment>
<sequence>MEDIHSGPATNTNPIVFFDIALGGVPLGRIKMELFADVTPRTAENFRRFCTGESKNSQGKPQGYKNSKFHRVIKDFMIQGGDFVNGDGTGSCTIYGTPKFADENFVLKHDRAGVLSMANSGPNTNGCQFFITTTATPFLNGKHVVFGQVVDGMDIVRMIENTRTIRDKPSQDVIITQCGEM</sequence>